<sequence length="459" mass="52017">MSNKAWGGRFEVQPEEWVDDFNASITFDQTLIDQDIEGSIAHATMLANQGIISQQDSEQIIQGLKSIQHDYHQDQIQFSASLEDIHLNIEHELIKRIGDAGGKLHTGRSRNDQVATDMHLYTKKQVQDIIALIKSLQSVIVDIASNNVDTIMPGYTHLQRAQPISFAHHIMTYFWMLQRDQQRFEDSLKRIDINPLGAAALSGTTYPIDRHETTALLNFGSLYENSLDAVSDRDYIIETLHNISLTMVHLSRFAEEIIFWSTDEAKFITLSDAFSTGSSIMPQKKNPDMAELIRGKVGRTTGHLMSMLMTLKGLPLAYNKDMQEDKEGLFDAVHTIKGSLRIFEGMIQTMTINKERLNQTVKEDFSNATELADYLVTKNIPFRTAHEIVGKIVLECIQQGHYLLDVPLATYQQHHSSIDADIYDYLQPENCLKRRQSYGSTGQSSVKQQLDVAKQLLSQ</sequence>
<protein>
    <recommendedName>
        <fullName evidence="1">Argininosuccinate lyase</fullName>
        <shortName evidence="1">ASAL</shortName>
        <ecNumber evidence="1">4.3.2.1</ecNumber>
    </recommendedName>
    <alternativeName>
        <fullName evidence="1">Arginosuccinase</fullName>
    </alternativeName>
</protein>
<keyword id="KW-0028">Amino-acid biosynthesis</keyword>
<keyword id="KW-0055">Arginine biosynthesis</keyword>
<keyword id="KW-0963">Cytoplasm</keyword>
<keyword id="KW-0456">Lyase</keyword>
<dbReference type="EC" id="4.3.2.1" evidence="1"/>
<dbReference type="EMBL" id="BA000018">
    <property type="protein sequence ID" value="BAB42060.1"/>
    <property type="molecule type" value="Genomic_DNA"/>
</dbReference>
<dbReference type="PIR" id="A89863">
    <property type="entry name" value="A89863"/>
</dbReference>
<dbReference type="RefSeq" id="WP_000066053.1">
    <property type="nucleotide sequence ID" value="NC_002745.2"/>
</dbReference>
<dbReference type="SMR" id="P63583"/>
<dbReference type="EnsemblBacteria" id="BAB42060">
    <property type="protein sequence ID" value="BAB42060"/>
    <property type="gene ID" value="BAB42060"/>
</dbReference>
<dbReference type="KEGG" id="sau:SA0821"/>
<dbReference type="HOGENOM" id="CLU_027272_2_3_9"/>
<dbReference type="UniPathway" id="UPA00068">
    <property type="reaction ID" value="UER00114"/>
</dbReference>
<dbReference type="GO" id="GO:0005829">
    <property type="term" value="C:cytosol"/>
    <property type="evidence" value="ECO:0007669"/>
    <property type="project" value="TreeGrafter"/>
</dbReference>
<dbReference type="GO" id="GO:0004056">
    <property type="term" value="F:argininosuccinate lyase activity"/>
    <property type="evidence" value="ECO:0007669"/>
    <property type="project" value="UniProtKB-UniRule"/>
</dbReference>
<dbReference type="GO" id="GO:0042450">
    <property type="term" value="P:arginine biosynthetic process via ornithine"/>
    <property type="evidence" value="ECO:0007669"/>
    <property type="project" value="InterPro"/>
</dbReference>
<dbReference type="GO" id="GO:0006526">
    <property type="term" value="P:L-arginine biosynthetic process"/>
    <property type="evidence" value="ECO:0007669"/>
    <property type="project" value="UniProtKB-UniRule"/>
</dbReference>
<dbReference type="CDD" id="cd01359">
    <property type="entry name" value="Argininosuccinate_lyase"/>
    <property type="match status" value="1"/>
</dbReference>
<dbReference type="FunFam" id="1.10.275.10:FF:000002">
    <property type="entry name" value="Argininosuccinate lyase"/>
    <property type="match status" value="1"/>
</dbReference>
<dbReference type="FunFam" id="1.10.40.30:FF:000001">
    <property type="entry name" value="Argininosuccinate lyase"/>
    <property type="match status" value="1"/>
</dbReference>
<dbReference type="FunFam" id="1.20.200.10:FF:000006">
    <property type="entry name" value="Argininosuccinate lyase"/>
    <property type="match status" value="1"/>
</dbReference>
<dbReference type="Gene3D" id="1.10.40.30">
    <property type="entry name" value="Fumarase/aspartase (C-terminal domain)"/>
    <property type="match status" value="1"/>
</dbReference>
<dbReference type="Gene3D" id="1.20.200.10">
    <property type="entry name" value="Fumarase/aspartase (Central domain)"/>
    <property type="match status" value="1"/>
</dbReference>
<dbReference type="Gene3D" id="1.10.275.10">
    <property type="entry name" value="Fumarase/aspartase (N-terminal domain)"/>
    <property type="match status" value="1"/>
</dbReference>
<dbReference type="HAMAP" id="MF_00006">
    <property type="entry name" value="Arg_succ_lyase"/>
    <property type="match status" value="1"/>
</dbReference>
<dbReference type="InterPro" id="IPR029419">
    <property type="entry name" value="Arg_succ_lyase_C"/>
</dbReference>
<dbReference type="InterPro" id="IPR009049">
    <property type="entry name" value="Argininosuccinate_lyase"/>
</dbReference>
<dbReference type="InterPro" id="IPR024083">
    <property type="entry name" value="Fumarase/histidase_N"/>
</dbReference>
<dbReference type="InterPro" id="IPR020557">
    <property type="entry name" value="Fumarate_lyase_CS"/>
</dbReference>
<dbReference type="InterPro" id="IPR000362">
    <property type="entry name" value="Fumarate_lyase_fam"/>
</dbReference>
<dbReference type="InterPro" id="IPR022761">
    <property type="entry name" value="Fumarate_lyase_N"/>
</dbReference>
<dbReference type="InterPro" id="IPR008948">
    <property type="entry name" value="L-Aspartase-like"/>
</dbReference>
<dbReference type="NCBIfam" id="TIGR00838">
    <property type="entry name" value="argH"/>
    <property type="match status" value="1"/>
</dbReference>
<dbReference type="PANTHER" id="PTHR43814">
    <property type="entry name" value="ARGININOSUCCINATE LYASE"/>
    <property type="match status" value="1"/>
</dbReference>
<dbReference type="PANTHER" id="PTHR43814:SF1">
    <property type="entry name" value="ARGININOSUCCINATE LYASE"/>
    <property type="match status" value="1"/>
</dbReference>
<dbReference type="Pfam" id="PF14698">
    <property type="entry name" value="ASL_C2"/>
    <property type="match status" value="1"/>
</dbReference>
<dbReference type="Pfam" id="PF00206">
    <property type="entry name" value="Lyase_1"/>
    <property type="match status" value="1"/>
</dbReference>
<dbReference type="PRINTS" id="PR00145">
    <property type="entry name" value="ARGSUCLYASE"/>
</dbReference>
<dbReference type="PRINTS" id="PR00149">
    <property type="entry name" value="FUMRATELYASE"/>
</dbReference>
<dbReference type="SUPFAM" id="SSF48557">
    <property type="entry name" value="L-aspartase-like"/>
    <property type="match status" value="1"/>
</dbReference>
<dbReference type="PROSITE" id="PS00163">
    <property type="entry name" value="FUMARATE_LYASES"/>
    <property type="match status" value="1"/>
</dbReference>
<feature type="chain" id="PRO_0000137823" description="Argininosuccinate lyase">
    <location>
        <begin position="1"/>
        <end position="459"/>
    </location>
</feature>
<reference key="1">
    <citation type="journal article" date="2001" name="Lancet">
        <title>Whole genome sequencing of meticillin-resistant Staphylococcus aureus.</title>
        <authorList>
            <person name="Kuroda M."/>
            <person name="Ohta T."/>
            <person name="Uchiyama I."/>
            <person name="Baba T."/>
            <person name="Yuzawa H."/>
            <person name="Kobayashi I."/>
            <person name="Cui L."/>
            <person name="Oguchi A."/>
            <person name="Aoki K."/>
            <person name="Nagai Y."/>
            <person name="Lian J.-Q."/>
            <person name="Ito T."/>
            <person name="Kanamori M."/>
            <person name="Matsumaru H."/>
            <person name="Maruyama A."/>
            <person name="Murakami H."/>
            <person name="Hosoyama A."/>
            <person name="Mizutani-Ui Y."/>
            <person name="Takahashi N.K."/>
            <person name="Sawano T."/>
            <person name="Inoue R."/>
            <person name="Kaito C."/>
            <person name="Sekimizu K."/>
            <person name="Hirakawa H."/>
            <person name="Kuhara S."/>
            <person name="Goto S."/>
            <person name="Yabuzaki J."/>
            <person name="Kanehisa M."/>
            <person name="Yamashita A."/>
            <person name="Oshima K."/>
            <person name="Furuya K."/>
            <person name="Yoshino C."/>
            <person name="Shiba T."/>
            <person name="Hattori M."/>
            <person name="Ogasawara N."/>
            <person name="Hayashi H."/>
            <person name="Hiramatsu K."/>
        </authorList>
    </citation>
    <scope>NUCLEOTIDE SEQUENCE [LARGE SCALE GENOMIC DNA]</scope>
    <source>
        <strain>N315</strain>
    </source>
</reference>
<gene>
    <name evidence="1" type="primary">argH</name>
    <name type="ordered locus">SA0821</name>
</gene>
<evidence type="ECO:0000255" key="1">
    <source>
        <dbReference type="HAMAP-Rule" id="MF_00006"/>
    </source>
</evidence>
<accession>P63583</accession>
<accession>Q99VC8</accession>
<organism>
    <name type="scientific">Staphylococcus aureus (strain N315)</name>
    <dbReference type="NCBI Taxonomy" id="158879"/>
    <lineage>
        <taxon>Bacteria</taxon>
        <taxon>Bacillati</taxon>
        <taxon>Bacillota</taxon>
        <taxon>Bacilli</taxon>
        <taxon>Bacillales</taxon>
        <taxon>Staphylococcaceae</taxon>
        <taxon>Staphylococcus</taxon>
    </lineage>
</organism>
<name>ARLY_STAAN</name>
<proteinExistence type="inferred from homology"/>
<comment type="catalytic activity">
    <reaction evidence="1">
        <text>2-(N(omega)-L-arginino)succinate = fumarate + L-arginine</text>
        <dbReference type="Rhea" id="RHEA:24020"/>
        <dbReference type="ChEBI" id="CHEBI:29806"/>
        <dbReference type="ChEBI" id="CHEBI:32682"/>
        <dbReference type="ChEBI" id="CHEBI:57472"/>
        <dbReference type="EC" id="4.3.2.1"/>
    </reaction>
</comment>
<comment type="pathway">
    <text evidence="1">Amino-acid biosynthesis; L-arginine biosynthesis; L-arginine from L-ornithine and carbamoyl phosphate: step 3/3.</text>
</comment>
<comment type="subcellular location">
    <subcellularLocation>
        <location evidence="1">Cytoplasm</location>
    </subcellularLocation>
</comment>
<comment type="similarity">
    <text evidence="1">Belongs to the lyase 1 family. Argininosuccinate lyase subfamily.</text>
</comment>